<protein>
    <recommendedName>
        <fullName evidence="1">GMP synthase [glutamine-hydrolyzing]</fullName>
        <ecNumber evidence="1">6.3.5.2</ecNumber>
    </recommendedName>
    <alternativeName>
        <fullName evidence="1">GMP synthetase</fullName>
    </alternativeName>
    <alternativeName>
        <fullName evidence="1">Glutamine amidotransferase</fullName>
    </alternativeName>
</protein>
<keyword id="KW-0067">ATP-binding</keyword>
<keyword id="KW-0315">Glutamine amidotransferase</keyword>
<keyword id="KW-0332">GMP biosynthesis</keyword>
<keyword id="KW-0436">Ligase</keyword>
<keyword id="KW-0547">Nucleotide-binding</keyword>
<keyword id="KW-0658">Purine biosynthesis</keyword>
<keyword id="KW-1185">Reference proteome</keyword>
<evidence type="ECO:0000255" key="1">
    <source>
        <dbReference type="HAMAP-Rule" id="MF_00344"/>
    </source>
</evidence>
<reference key="1">
    <citation type="submission" date="2005-10" db="EMBL/GenBank/DDBJ databases">
        <title>Complete sequence of Pelobacter carbinolicus DSM 2380.</title>
        <authorList>
            <person name="Copeland A."/>
            <person name="Lucas S."/>
            <person name="Lapidus A."/>
            <person name="Barry K."/>
            <person name="Detter J.C."/>
            <person name="Glavina T."/>
            <person name="Hammon N."/>
            <person name="Israni S."/>
            <person name="Pitluck S."/>
            <person name="Chertkov O."/>
            <person name="Schmutz J."/>
            <person name="Larimer F."/>
            <person name="Land M."/>
            <person name="Kyrpides N."/>
            <person name="Ivanova N."/>
            <person name="Richardson P."/>
        </authorList>
    </citation>
    <scope>NUCLEOTIDE SEQUENCE [LARGE SCALE GENOMIC DNA]</scope>
    <source>
        <strain>DSM 2380 / NBRC 103641 / GraBd1</strain>
    </source>
</reference>
<proteinExistence type="inferred from homology"/>
<sequence>MSQDIHGEKILILDFGSQYTQLIARRVREAHVYCELHPFDMDLDAIRAFGPKGIILSGGPKSVYEEGAPVVEEALFELGIPVLGICYGMQLMSRHFGGRVVPAGKREYGHATLLPCGSPGPLFDEFFVDGKSPVWMSHGDHVEQVPDGFEVVGCSENAPVCAIQDIARDLYGVQFHPEVNHTPRGEQLLDTFVRQICGCTGQWTPGQIIEDAVVRIREQVGSERVILGLSGGVDSSVAAALIQRAIGDQLVCVFVDNGLLRLDEGDQVMRTFAQNMGVNVIRVNAQDRFMTALAGESDPERKRKIIGNLFVEIFEEESANIEDATWLAQGTIYPDVIESAGAKTGKAHNIKSHHNVGGLPEHMKLKLLEPLRELFKDEVRAIGEELGLPHPMVYRHPFPGPGLGVRILGEVKPEYADILRRADAIYIEELYRTGHYDKISQAFAVFLPVKSVGVMGDGRTYEYVIALRAVETKDFMTAGWYPLPYADMAHISGRIINEVKGVNRVVYDISSKPPATIEWE</sequence>
<accession>Q3A590</accession>
<name>GUAA_SYNC1</name>
<feature type="chain" id="PRO_0000229451" description="GMP synthase [glutamine-hydrolyzing]">
    <location>
        <begin position="1"/>
        <end position="520"/>
    </location>
</feature>
<feature type="domain" description="Glutamine amidotransferase type-1" evidence="1">
    <location>
        <begin position="9"/>
        <end position="202"/>
    </location>
</feature>
<feature type="domain" description="GMPS ATP-PPase" evidence="1">
    <location>
        <begin position="203"/>
        <end position="395"/>
    </location>
</feature>
<feature type="active site" description="Nucleophile" evidence="1">
    <location>
        <position position="86"/>
    </location>
</feature>
<feature type="active site" evidence="1">
    <location>
        <position position="176"/>
    </location>
</feature>
<feature type="active site" evidence="1">
    <location>
        <position position="178"/>
    </location>
</feature>
<feature type="binding site" evidence="1">
    <location>
        <begin position="230"/>
        <end position="236"/>
    </location>
    <ligand>
        <name>ATP</name>
        <dbReference type="ChEBI" id="CHEBI:30616"/>
    </ligand>
</feature>
<comment type="function">
    <text evidence="1">Catalyzes the synthesis of GMP from XMP.</text>
</comment>
<comment type="catalytic activity">
    <reaction evidence="1">
        <text>XMP + L-glutamine + ATP + H2O = GMP + L-glutamate + AMP + diphosphate + 2 H(+)</text>
        <dbReference type="Rhea" id="RHEA:11680"/>
        <dbReference type="ChEBI" id="CHEBI:15377"/>
        <dbReference type="ChEBI" id="CHEBI:15378"/>
        <dbReference type="ChEBI" id="CHEBI:29985"/>
        <dbReference type="ChEBI" id="CHEBI:30616"/>
        <dbReference type="ChEBI" id="CHEBI:33019"/>
        <dbReference type="ChEBI" id="CHEBI:57464"/>
        <dbReference type="ChEBI" id="CHEBI:58115"/>
        <dbReference type="ChEBI" id="CHEBI:58359"/>
        <dbReference type="ChEBI" id="CHEBI:456215"/>
        <dbReference type="EC" id="6.3.5.2"/>
    </reaction>
</comment>
<comment type="pathway">
    <text evidence="1">Purine metabolism; GMP biosynthesis; GMP from XMP (L-Gln route): step 1/1.</text>
</comment>
<comment type="subunit">
    <text evidence="1">Homodimer.</text>
</comment>
<dbReference type="EC" id="6.3.5.2" evidence="1"/>
<dbReference type="EMBL" id="CP000142">
    <property type="protein sequence ID" value="ABA88467.1"/>
    <property type="molecule type" value="Genomic_DNA"/>
</dbReference>
<dbReference type="RefSeq" id="WP_011340941.1">
    <property type="nucleotide sequence ID" value="NC_007498.2"/>
</dbReference>
<dbReference type="SMR" id="Q3A590"/>
<dbReference type="STRING" id="338963.Pcar_1218"/>
<dbReference type="KEGG" id="pca:Pcar_1218"/>
<dbReference type="eggNOG" id="COG0518">
    <property type="taxonomic scope" value="Bacteria"/>
</dbReference>
<dbReference type="eggNOG" id="COG0519">
    <property type="taxonomic scope" value="Bacteria"/>
</dbReference>
<dbReference type="HOGENOM" id="CLU_014340_0_5_7"/>
<dbReference type="OrthoDB" id="9802219at2"/>
<dbReference type="UniPathway" id="UPA00189">
    <property type="reaction ID" value="UER00296"/>
</dbReference>
<dbReference type="Proteomes" id="UP000002534">
    <property type="component" value="Chromosome"/>
</dbReference>
<dbReference type="GO" id="GO:0005829">
    <property type="term" value="C:cytosol"/>
    <property type="evidence" value="ECO:0007669"/>
    <property type="project" value="TreeGrafter"/>
</dbReference>
<dbReference type="GO" id="GO:0005524">
    <property type="term" value="F:ATP binding"/>
    <property type="evidence" value="ECO:0007669"/>
    <property type="project" value="UniProtKB-UniRule"/>
</dbReference>
<dbReference type="GO" id="GO:0003921">
    <property type="term" value="F:GMP synthase activity"/>
    <property type="evidence" value="ECO:0007669"/>
    <property type="project" value="InterPro"/>
</dbReference>
<dbReference type="CDD" id="cd01742">
    <property type="entry name" value="GATase1_GMP_Synthase"/>
    <property type="match status" value="1"/>
</dbReference>
<dbReference type="CDD" id="cd01997">
    <property type="entry name" value="GMP_synthase_C"/>
    <property type="match status" value="1"/>
</dbReference>
<dbReference type="FunFam" id="3.30.300.10:FF:000002">
    <property type="entry name" value="GMP synthase [glutamine-hydrolyzing]"/>
    <property type="match status" value="1"/>
</dbReference>
<dbReference type="FunFam" id="3.40.50.620:FF:000001">
    <property type="entry name" value="GMP synthase [glutamine-hydrolyzing]"/>
    <property type="match status" value="1"/>
</dbReference>
<dbReference type="FunFam" id="3.40.50.880:FF:000001">
    <property type="entry name" value="GMP synthase [glutamine-hydrolyzing]"/>
    <property type="match status" value="1"/>
</dbReference>
<dbReference type="Gene3D" id="3.30.300.10">
    <property type="match status" value="1"/>
</dbReference>
<dbReference type="Gene3D" id="3.40.50.880">
    <property type="match status" value="1"/>
</dbReference>
<dbReference type="Gene3D" id="3.40.50.620">
    <property type="entry name" value="HUPs"/>
    <property type="match status" value="1"/>
</dbReference>
<dbReference type="HAMAP" id="MF_00344">
    <property type="entry name" value="GMP_synthase"/>
    <property type="match status" value="1"/>
</dbReference>
<dbReference type="InterPro" id="IPR029062">
    <property type="entry name" value="Class_I_gatase-like"/>
</dbReference>
<dbReference type="InterPro" id="IPR017926">
    <property type="entry name" value="GATASE"/>
</dbReference>
<dbReference type="InterPro" id="IPR001674">
    <property type="entry name" value="GMP_synth_C"/>
</dbReference>
<dbReference type="InterPro" id="IPR004739">
    <property type="entry name" value="GMP_synth_GATase"/>
</dbReference>
<dbReference type="InterPro" id="IPR022955">
    <property type="entry name" value="GMP_synthase"/>
</dbReference>
<dbReference type="InterPro" id="IPR025777">
    <property type="entry name" value="GMPS_ATP_PPase_dom"/>
</dbReference>
<dbReference type="InterPro" id="IPR022310">
    <property type="entry name" value="NAD/GMP_synthase"/>
</dbReference>
<dbReference type="InterPro" id="IPR014729">
    <property type="entry name" value="Rossmann-like_a/b/a_fold"/>
</dbReference>
<dbReference type="NCBIfam" id="TIGR00884">
    <property type="entry name" value="guaA_Cterm"/>
    <property type="match status" value="1"/>
</dbReference>
<dbReference type="NCBIfam" id="TIGR00888">
    <property type="entry name" value="guaA_Nterm"/>
    <property type="match status" value="1"/>
</dbReference>
<dbReference type="NCBIfam" id="NF000848">
    <property type="entry name" value="PRK00074.1"/>
    <property type="match status" value="1"/>
</dbReference>
<dbReference type="PANTHER" id="PTHR11922:SF2">
    <property type="entry name" value="GMP SYNTHASE [GLUTAMINE-HYDROLYZING]"/>
    <property type="match status" value="1"/>
</dbReference>
<dbReference type="PANTHER" id="PTHR11922">
    <property type="entry name" value="GMP SYNTHASE-RELATED"/>
    <property type="match status" value="1"/>
</dbReference>
<dbReference type="Pfam" id="PF00117">
    <property type="entry name" value="GATase"/>
    <property type="match status" value="1"/>
</dbReference>
<dbReference type="Pfam" id="PF00958">
    <property type="entry name" value="GMP_synt_C"/>
    <property type="match status" value="1"/>
</dbReference>
<dbReference type="Pfam" id="PF02540">
    <property type="entry name" value="NAD_synthase"/>
    <property type="match status" value="1"/>
</dbReference>
<dbReference type="PRINTS" id="PR00097">
    <property type="entry name" value="ANTSNTHASEII"/>
</dbReference>
<dbReference type="PRINTS" id="PR00099">
    <property type="entry name" value="CPSGATASE"/>
</dbReference>
<dbReference type="PRINTS" id="PR00096">
    <property type="entry name" value="GATASE"/>
</dbReference>
<dbReference type="SUPFAM" id="SSF52402">
    <property type="entry name" value="Adenine nucleotide alpha hydrolases-like"/>
    <property type="match status" value="1"/>
</dbReference>
<dbReference type="SUPFAM" id="SSF52317">
    <property type="entry name" value="Class I glutamine amidotransferase-like"/>
    <property type="match status" value="1"/>
</dbReference>
<dbReference type="SUPFAM" id="SSF54810">
    <property type="entry name" value="GMP synthetase C-terminal dimerisation domain"/>
    <property type="match status" value="1"/>
</dbReference>
<dbReference type="PROSITE" id="PS51273">
    <property type="entry name" value="GATASE_TYPE_1"/>
    <property type="match status" value="1"/>
</dbReference>
<dbReference type="PROSITE" id="PS51553">
    <property type="entry name" value="GMPS_ATP_PPASE"/>
    <property type="match status" value="1"/>
</dbReference>
<gene>
    <name evidence="1" type="primary">guaA</name>
    <name type="ordered locus">Pcar_1218</name>
</gene>
<organism>
    <name type="scientific">Syntrophotalea carbinolica (strain DSM 2380 / NBRC 103641 / GraBd1)</name>
    <name type="common">Pelobacter carbinolicus</name>
    <dbReference type="NCBI Taxonomy" id="338963"/>
    <lineage>
        <taxon>Bacteria</taxon>
        <taxon>Pseudomonadati</taxon>
        <taxon>Thermodesulfobacteriota</taxon>
        <taxon>Desulfuromonadia</taxon>
        <taxon>Desulfuromonadales</taxon>
        <taxon>Syntrophotaleaceae</taxon>
        <taxon>Syntrophotalea</taxon>
    </lineage>
</organism>